<dbReference type="EMBL" id="EF067920">
    <property type="protein sequence ID" value="ABK20607.1"/>
    <property type="molecule type" value="Genomic_DNA"/>
</dbReference>
<dbReference type="RefSeq" id="YP_874384.1">
    <property type="nucleotide sequence ID" value="NC_008588.1"/>
</dbReference>
<dbReference type="SMR" id="A0T0A9"/>
<dbReference type="STRING" id="556484.A0T0A9"/>
<dbReference type="GeneID" id="4524669"/>
<dbReference type="InParanoid" id="A0T0A9"/>
<dbReference type="Proteomes" id="UP000000759">
    <property type="component" value="Chloroplast"/>
</dbReference>
<dbReference type="GO" id="GO:0009535">
    <property type="term" value="C:chloroplast thylakoid membrane"/>
    <property type="evidence" value="ECO:0007669"/>
    <property type="project" value="UniProtKB-SubCell"/>
</dbReference>
<dbReference type="GO" id="GO:0009523">
    <property type="term" value="C:photosystem II"/>
    <property type="evidence" value="ECO:0007669"/>
    <property type="project" value="UniProtKB-KW"/>
</dbReference>
<dbReference type="GO" id="GO:0042301">
    <property type="term" value="F:phosphate ion binding"/>
    <property type="evidence" value="ECO:0007669"/>
    <property type="project" value="InterPro"/>
</dbReference>
<dbReference type="GO" id="GO:0015979">
    <property type="term" value="P:photosynthesis"/>
    <property type="evidence" value="ECO:0007669"/>
    <property type="project" value="UniProtKB-UniRule"/>
</dbReference>
<dbReference type="GO" id="GO:0050821">
    <property type="term" value="P:protein stabilization"/>
    <property type="evidence" value="ECO:0007669"/>
    <property type="project" value="InterPro"/>
</dbReference>
<dbReference type="Gene3D" id="1.20.5.880">
    <property type="entry name" value="Photosystem II reaction center protein H"/>
    <property type="match status" value="1"/>
</dbReference>
<dbReference type="HAMAP" id="MF_00752">
    <property type="entry name" value="PSII_PsbH"/>
    <property type="match status" value="1"/>
</dbReference>
<dbReference type="InterPro" id="IPR001056">
    <property type="entry name" value="PSII_PsbH"/>
</dbReference>
<dbReference type="InterPro" id="IPR036863">
    <property type="entry name" value="PSII_PsbH_sf"/>
</dbReference>
<dbReference type="NCBIfam" id="NF002728">
    <property type="entry name" value="PRK02624.1"/>
    <property type="match status" value="1"/>
</dbReference>
<dbReference type="PANTHER" id="PTHR34469">
    <property type="entry name" value="PHOTOSYSTEM II REACTION CENTER PROTEIN H"/>
    <property type="match status" value="1"/>
</dbReference>
<dbReference type="PANTHER" id="PTHR34469:SF4">
    <property type="entry name" value="PHOTOSYSTEM II REACTION CENTER PROTEIN H"/>
    <property type="match status" value="1"/>
</dbReference>
<dbReference type="Pfam" id="PF00737">
    <property type="entry name" value="PsbH"/>
    <property type="match status" value="1"/>
</dbReference>
<dbReference type="SUPFAM" id="SSF161025">
    <property type="entry name" value="Photosystem II 10 kDa phosphoprotein PsbH"/>
    <property type="match status" value="1"/>
</dbReference>
<reference key="1">
    <citation type="journal article" date="2007" name="Mol. Genet. Genomics">
        <title>Chloroplast genomes of the diatoms Phaeodactylum tricornutum and Thalassiosira pseudonana: comparison with other plastid genomes of the red lineage.</title>
        <authorList>
            <person name="Oudot-Le Secq M.-P."/>
            <person name="Grimwood J."/>
            <person name="Shapiro H."/>
            <person name="Armbrust E.V."/>
            <person name="Bowler C."/>
            <person name="Green B.R."/>
        </authorList>
    </citation>
    <scope>NUCLEOTIDE SEQUENCE [LARGE SCALE GENOMIC DNA]</scope>
    <source>
        <strain>CCAP 1055/1</strain>
    </source>
</reference>
<organism>
    <name type="scientific">Phaeodactylum tricornutum (strain CCAP 1055/1)</name>
    <dbReference type="NCBI Taxonomy" id="556484"/>
    <lineage>
        <taxon>Eukaryota</taxon>
        <taxon>Sar</taxon>
        <taxon>Stramenopiles</taxon>
        <taxon>Ochrophyta</taxon>
        <taxon>Bacillariophyta</taxon>
        <taxon>Bacillariophyceae</taxon>
        <taxon>Bacillariophycidae</taxon>
        <taxon>Naviculales</taxon>
        <taxon>Phaeodactylaceae</taxon>
        <taxon>Phaeodactylum</taxon>
    </lineage>
</organism>
<proteinExistence type="inferred from homology"/>
<evidence type="ECO:0000255" key="1">
    <source>
        <dbReference type="HAMAP-Rule" id="MF_00752"/>
    </source>
</evidence>
<name>PSBH_PHATC</name>
<feature type="chain" id="PRO_0000275781" description="Photosystem II reaction center protein H">
    <location>
        <begin position="1"/>
        <end position="67"/>
    </location>
</feature>
<feature type="transmembrane region" description="Helical" evidence="1">
    <location>
        <begin position="29"/>
        <end position="49"/>
    </location>
</feature>
<gene>
    <name evidence="1" type="primary">psbH</name>
</gene>
<sequence>MALRTRLGELLRPLNAEYGKVAPGWGTTPIMAVVMGAFLVFLLIILQIYNSSLIIENVDVDWTNGIV</sequence>
<keyword id="KW-0150">Chloroplast</keyword>
<keyword id="KW-0472">Membrane</keyword>
<keyword id="KW-0602">Photosynthesis</keyword>
<keyword id="KW-0604">Photosystem II</keyword>
<keyword id="KW-0934">Plastid</keyword>
<keyword id="KW-1185">Reference proteome</keyword>
<keyword id="KW-0793">Thylakoid</keyword>
<keyword id="KW-0812">Transmembrane</keyword>
<keyword id="KW-1133">Transmembrane helix</keyword>
<protein>
    <recommendedName>
        <fullName evidence="1">Photosystem II reaction center protein H</fullName>
        <shortName evidence="1">PSII-H</shortName>
    </recommendedName>
</protein>
<accession>A0T0A9</accession>
<geneLocation type="chloroplast"/>
<comment type="function">
    <text evidence="1">One of the components of the core complex of photosystem II (PSII), required for its stability and/or assembly. PSII is a light-driven water:plastoquinone oxidoreductase that uses light energy to abstract electrons from H(2)O, generating O(2) and a proton gradient subsequently used for ATP formation. It consists of a core antenna complex that captures photons, and an electron transfer chain that converts photonic excitation into a charge separation.</text>
</comment>
<comment type="subunit">
    <text evidence="1">PSII is composed of 1 copy each of membrane proteins PsbA, PsbB, PsbC, PsbD, PsbE, PsbF, PsbH, PsbI, PsbJ, PsbK, PsbL, PsbM, PsbT, PsbX, PsbY, PsbZ, Psb30/Ycf12, at least 3 peripheral proteins of the oxygen-evolving complex and a large number of cofactors. It forms dimeric complexes.</text>
</comment>
<comment type="subcellular location">
    <subcellularLocation>
        <location evidence="1">Plastid</location>
        <location evidence="1">Chloroplast thylakoid membrane</location>
        <topology evidence="1">Single-pass membrane protein</topology>
    </subcellularLocation>
</comment>
<comment type="similarity">
    <text evidence="1">Belongs to the PsbH family.</text>
</comment>